<comment type="function">
    <text evidence="1">This protein is located at the 30S-50S ribosomal subunit interface and may play a role in the structure and function of the aminoacyl-tRNA binding site.</text>
</comment>
<comment type="similarity">
    <text evidence="1">Belongs to the bacterial ribosomal protein bL19 family.</text>
</comment>
<gene>
    <name evidence="1" type="primary">rplS</name>
    <name type="ordered locus">MMAR_1804</name>
</gene>
<dbReference type="EMBL" id="CP000854">
    <property type="protein sequence ID" value="ACC40253.1"/>
    <property type="molecule type" value="Genomic_DNA"/>
</dbReference>
<dbReference type="RefSeq" id="WP_012393605.1">
    <property type="nucleotide sequence ID" value="NC_010612.1"/>
</dbReference>
<dbReference type="SMR" id="B2HJL7"/>
<dbReference type="STRING" id="216594.MMAR_1804"/>
<dbReference type="GeneID" id="34343767"/>
<dbReference type="GeneID" id="93436378"/>
<dbReference type="KEGG" id="mmi:MMAR_1804"/>
<dbReference type="eggNOG" id="COG0335">
    <property type="taxonomic scope" value="Bacteria"/>
</dbReference>
<dbReference type="HOGENOM" id="CLU_103507_2_1_11"/>
<dbReference type="OrthoDB" id="9803541at2"/>
<dbReference type="Proteomes" id="UP000001190">
    <property type="component" value="Chromosome"/>
</dbReference>
<dbReference type="GO" id="GO:0022625">
    <property type="term" value="C:cytosolic large ribosomal subunit"/>
    <property type="evidence" value="ECO:0007669"/>
    <property type="project" value="TreeGrafter"/>
</dbReference>
<dbReference type="GO" id="GO:0003735">
    <property type="term" value="F:structural constituent of ribosome"/>
    <property type="evidence" value="ECO:0007669"/>
    <property type="project" value="InterPro"/>
</dbReference>
<dbReference type="GO" id="GO:0006412">
    <property type="term" value="P:translation"/>
    <property type="evidence" value="ECO:0007669"/>
    <property type="project" value="UniProtKB-UniRule"/>
</dbReference>
<dbReference type="FunFam" id="2.30.30.790:FF:000001">
    <property type="entry name" value="50S ribosomal protein L19"/>
    <property type="match status" value="1"/>
</dbReference>
<dbReference type="Gene3D" id="2.30.30.790">
    <property type="match status" value="1"/>
</dbReference>
<dbReference type="HAMAP" id="MF_00402">
    <property type="entry name" value="Ribosomal_bL19"/>
    <property type="match status" value="1"/>
</dbReference>
<dbReference type="InterPro" id="IPR001857">
    <property type="entry name" value="Ribosomal_bL19"/>
</dbReference>
<dbReference type="InterPro" id="IPR018257">
    <property type="entry name" value="Ribosomal_bL19_CS"/>
</dbReference>
<dbReference type="InterPro" id="IPR038657">
    <property type="entry name" value="Ribosomal_bL19_sf"/>
</dbReference>
<dbReference type="InterPro" id="IPR008991">
    <property type="entry name" value="Translation_prot_SH3-like_sf"/>
</dbReference>
<dbReference type="NCBIfam" id="TIGR01024">
    <property type="entry name" value="rplS_bact"/>
    <property type="match status" value="1"/>
</dbReference>
<dbReference type="PANTHER" id="PTHR15680:SF9">
    <property type="entry name" value="LARGE RIBOSOMAL SUBUNIT PROTEIN BL19M"/>
    <property type="match status" value="1"/>
</dbReference>
<dbReference type="PANTHER" id="PTHR15680">
    <property type="entry name" value="RIBOSOMAL PROTEIN L19"/>
    <property type="match status" value="1"/>
</dbReference>
<dbReference type="Pfam" id="PF01245">
    <property type="entry name" value="Ribosomal_L19"/>
    <property type="match status" value="1"/>
</dbReference>
<dbReference type="PIRSF" id="PIRSF002191">
    <property type="entry name" value="Ribosomal_L19"/>
    <property type="match status" value="1"/>
</dbReference>
<dbReference type="PRINTS" id="PR00061">
    <property type="entry name" value="RIBOSOMALL19"/>
</dbReference>
<dbReference type="SUPFAM" id="SSF50104">
    <property type="entry name" value="Translation proteins SH3-like domain"/>
    <property type="match status" value="1"/>
</dbReference>
<dbReference type="PROSITE" id="PS01015">
    <property type="entry name" value="RIBOSOMAL_L19"/>
    <property type="match status" value="1"/>
</dbReference>
<name>RL19_MYCMM</name>
<evidence type="ECO:0000255" key="1">
    <source>
        <dbReference type="HAMAP-Rule" id="MF_00402"/>
    </source>
</evidence>
<evidence type="ECO:0000305" key="2"/>
<protein>
    <recommendedName>
        <fullName evidence="1">Large ribosomal subunit protein bL19</fullName>
    </recommendedName>
    <alternativeName>
        <fullName evidence="2">50S ribosomal protein L19</fullName>
    </alternativeName>
</protein>
<reference key="1">
    <citation type="journal article" date="2008" name="Genome Res.">
        <title>Insights from the complete genome sequence of Mycobacterium marinum on the evolution of Mycobacterium tuberculosis.</title>
        <authorList>
            <person name="Stinear T.P."/>
            <person name="Seemann T."/>
            <person name="Harrison P.F."/>
            <person name="Jenkin G.A."/>
            <person name="Davies J.K."/>
            <person name="Johnson P.D."/>
            <person name="Abdellah Z."/>
            <person name="Arrowsmith C."/>
            <person name="Chillingworth T."/>
            <person name="Churcher C."/>
            <person name="Clarke K."/>
            <person name="Cronin A."/>
            <person name="Davis P."/>
            <person name="Goodhead I."/>
            <person name="Holroyd N."/>
            <person name="Jagels K."/>
            <person name="Lord A."/>
            <person name="Moule S."/>
            <person name="Mungall K."/>
            <person name="Norbertczak H."/>
            <person name="Quail M.A."/>
            <person name="Rabbinowitsch E."/>
            <person name="Walker D."/>
            <person name="White B."/>
            <person name="Whitehead S."/>
            <person name="Small P.L."/>
            <person name="Brosch R."/>
            <person name="Ramakrishnan L."/>
            <person name="Fischbach M.A."/>
            <person name="Parkhill J."/>
            <person name="Cole S.T."/>
        </authorList>
    </citation>
    <scope>NUCLEOTIDE SEQUENCE [LARGE SCALE GENOMIC DNA]</scope>
    <source>
        <strain>ATCC BAA-535 / M</strain>
    </source>
</reference>
<keyword id="KW-1185">Reference proteome</keyword>
<keyword id="KW-0687">Ribonucleoprotein</keyword>
<keyword id="KW-0689">Ribosomal protein</keyword>
<sequence>MNRLDFVDQASLRDDIPAFSPGDTINVHVKVIEGAKERIQVFKGVVIRRQGGGIRETFTVRKESYGVGVERTFPVHSPNIDHIEVVTRGDVRRAKLYYLRELRGKKAKIKEKR</sequence>
<feature type="chain" id="PRO_1000123345" description="Large ribosomal subunit protein bL19">
    <location>
        <begin position="1"/>
        <end position="113"/>
    </location>
</feature>
<accession>B2HJL7</accession>
<proteinExistence type="inferred from homology"/>
<organism>
    <name type="scientific">Mycobacterium marinum (strain ATCC BAA-535 / M)</name>
    <dbReference type="NCBI Taxonomy" id="216594"/>
    <lineage>
        <taxon>Bacteria</taxon>
        <taxon>Bacillati</taxon>
        <taxon>Actinomycetota</taxon>
        <taxon>Actinomycetes</taxon>
        <taxon>Mycobacteriales</taxon>
        <taxon>Mycobacteriaceae</taxon>
        <taxon>Mycobacterium</taxon>
        <taxon>Mycobacterium ulcerans group</taxon>
    </lineage>
</organism>